<feature type="chain" id="PRO_0000172945" description="Dephospho-CoA kinase">
    <location>
        <begin position="1"/>
        <end position="205"/>
    </location>
</feature>
<feature type="domain" description="DPCK" evidence="1">
    <location>
        <begin position="15"/>
        <end position="205"/>
    </location>
</feature>
<feature type="binding site" evidence="1">
    <location>
        <begin position="23"/>
        <end position="28"/>
    </location>
    <ligand>
        <name>ATP</name>
        <dbReference type="ChEBI" id="CHEBI:30616"/>
    </ligand>
</feature>
<accession>Q7NIP9</accession>
<organism>
    <name type="scientific">Gloeobacter violaceus (strain ATCC 29082 / PCC 7421)</name>
    <dbReference type="NCBI Taxonomy" id="251221"/>
    <lineage>
        <taxon>Bacteria</taxon>
        <taxon>Bacillati</taxon>
        <taxon>Cyanobacteriota</taxon>
        <taxon>Cyanophyceae</taxon>
        <taxon>Gloeobacterales</taxon>
        <taxon>Gloeobacteraceae</taxon>
        <taxon>Gloeobacter</taxon>
    </lineage>
</organism>
<comment type="function">
    <text evidence="1">Catalyzes the phosphorylation of the 3'-hydroxyl group of dephosphocoenzyme A to form coenzyme A.</text>
</comment>
<comment type="catalytic activity">
    <reaction evidence="1">
        <text>3'-dephospho-CoA + ATP = ADP + CoA + H(+)</text>
        <dbReference type="Rhea" id="RHEA:18245"/>
        <dbReference type="ChEBI" id="CHEBI:15378"/>
        <dbReference type="ChEBI" id="CHEBI:30616"/>
        <dbReference type="ChEBI" id="CHEBI:57287"/>
        <dbReference type="ChEBI" id="CHEBI:57328"/>
        <dbReference type="ChEBI" id="CHEBI:456216"/>
        <dbReference type="EC" id="2.7.1.24"/>
    </reaction>
</comment>
<comment type="pathway">
    <text evidence="1">Cofactor biosynthesis; coenzyme A biosynthesis; CoA from (R)-pantothenate: step 5/5.</text>
</comment>
<comment type="subcellular location">
    <subcellularLocation>
        <location evidence="1">Cytoplasm</location>
    </subcellularLocation>
</comment>
<comment type="similarity">
    <text evidence="1">Belongs to the CoaE family.</text>
</comment>
<evidence type="ECO:0000255" key="1">
    <source>
        <dbReference type="HAMAP-Rule" id="MF_00376"/>
    </source>
</evidence>
<keyword id="KW-0067">ATP-binding</keyword>
<keyword id="KW-0173">Coenzyme A biosynthesis</keyword>
<keyword id="KW-0963">Cytoplasm</keyword>
<keyword id="KW-0418">Kinase</keyword>
<keyword id="KW-0547">Nucleotide-binding</keyword>
<keyword id="KW-1185">Reference proteome</keyword>
<keyword id="KW-0808">Transferase</keyword>
<sequence>MAGRAQGARWMARRVIGLTGGIATGKSTVGRLLAGWGIPVIDADLLAREAVAPGSAALAEIVQHYGSTMLTNAGALDRSALARIIFSDPQERRWVESRIHPSVRAAMQAAVEREPGTICLMIPLLFEAGMTDLVTEIWVVSCKPERQHARLKERDGLDDQAIAARIASQWPLTEKVRHADVVLDNDGDFAHLKIQVERALDQASI</sequence>
<gene>
    <name evidence="1" type="primary">coaE</name>
    <name type="ordered locus">glr2134</name>
</gene>
<reference key="1">
    <citation type="journal article" date="2003" name="DNA Res.">
        <title>Complete genome structure of Gloeobacter violaceus PCC 7421, a cyanobacterium that lacks thylakoids.</title>
        <authorList>
            <person name="Nakamura Y."/>
            <person name="Kaneko T."/>
            <person name="Sato S."/>
            <person name="Mimuro M."/>
            <person name="Miyashita H."/>
            <person name="Tsuchiya T."/>
            <person name="Sasamoto S."/>
            <person name="Watanabe A."/>
            <person name="Kawashima K."/>
            <person name="Kishida Y."/>
            <person name="Kiyokawa C."/>
            <person name="Kohara M."/>
            <person name="Matsumoto M."/>
            <person name="Matsuno A."/>
            <person name="Nakazaki N."/>
            <person name="Shimpo S."/>
            <person name="Takeuchi C."/>
            <person name="Yamada M."/>
            <person name="Tabata S."/>
        </authorList>
    </citation>
    <scope>NUCLEOTIDE SEQUENCE [LARGE SCALE GENOMIC DNA]</scope>
    <source>
        <strain>ATCC 29082 / PCC 7421</strain>
    </source>
</reference>
<proteinExistence type="inferred from homology"/>
<name>COAE_GLOVI</name>
<protein>
    <recommendedName>
        <fullName evidence="1">Dephospho-CoA kinase</fullName>
        <ecNumber evidence="1">2.7.1.24</ecNumber>
    </recommendedName>
    <alternativeName>
        <fullName evidence="1">Dephosphocoenzyme A kinase</fullName>
    </alternativeName>
</protein>
<dbReference type="EC" id="2.7.1.24" evidence="1"/>
<dbReference type="EMBL" id="BA000045">
    <property type="protein sequence ID" value="BAC90075.1"/>
    <property type="molecule type" value="Genomic_DNA"/>
</dbReference>
<dbReference type="RefSeq" id="NP_925080.1">
    <property type="nucleotide sequence ID" value="NC_005125.1"/>
</dbReference>
<dbReference type="RefSeq" id="WP_011142131.1">
    <property type="nucleotide sequence ID" value="NC_005125.1"/>
</dbReference>
<dbReference type="SMR" id="Q7NIP9"/>
<dbReference type="STRING" id="251221.gene:10759629"/>
<dbReference type="EnsemblBacteria" id="BAC90075">
    <property type="protein sequence ID" value="BAC90075"/>
    <property type="gene ID" value="BAC90075"/>
</dbReference>
<dbReference type="KEGG" id="gvi:glr2134"/>
<dbReference type="PATRIC" id="fig|251221.4.peg.2168"/>
<dbReference type="eggNOG" id="COG0237">
    <property type="taxonomic scope" value="Bacteria"/>
</dbReference>
<dbReference type="HOGENOM" id="CLU_057180_0_0_3"/>
<dbReference type="InParanoid" id="Q7NIP9"/>
<dbReference type="OrthoDB" id="9812943at2"/>
<dbReference type="PhylomeDB" id="Q7NIP9"/>
<dbReference type="UniPathway" id="UPA00241">
    <property type="reaction ID" value="UER00356"/>
</dbReference>
<dbReference type="Proteomes" id="UP000000557">
    <property type="component" value="Chromosome"/>
</dbReference>
<dbReference type="GO" id="GO:0005737">
    <property type="term" value="C:cytoplasm"/>
    <property type="evidence" value="ECO:0007669"/>
    <property type="project" value="UniProtKB-SubCell"/>
</dbReference>
<dbReference type="GO" id="GO:0005524">
    <property type="term" value="F:ATP binding"/>
    <property type="evidence" value="ECO:0007669"/>
    <property type="project" value="UniProtKB-UniRule"/>
</dbReference>
<dbReference type="GO" id="GO:0004140">
    <property type="term" value="F:dephospho-CoA kinase activity"/>
    <property type="evidence" value="ECO:0000318"/>
    <property type="project" value="GO_Central"/>
</dbReference>
<dbReference type="GO" id="GO:0015937">
    <property type="term" value="P:coenzyme A biosynthetic process"/>
    <property type="evidence" value="ECO:0000318"/>
    <property type="project" value="GO_Central"/>
</dbReference>
<dbReference type="CDD" id="cd02022">
    <property type="entry name" value="DPCK"/>
    <property type="match status" value="1"/>
</dbReference>
<dbReference type="Gene3D" id="3.40.50.300">
    <property type="entry name" value="P-loop containing nucleotide triphosphate hydrolases"/>
    <property type="match status" value="1"/>
</dbReference>
<dbReference type="HAMAP" id="MF_00376">
    <property type="entry name" value="Dephospho_CoA_kinase"/>
    <property type="match status" value="1"/>
</dbReference>
<dbReference type="InterPro" id="IPR001977">
    <property type="entry name" value="Depp_CoAkinase"/>
</dbReference>
<dbReference type="InterPro" id="IPR027417">
    <property type="entry name" value="P-loop_NTPase"/>
</dbReference>
<dbReference type="NCBIfam" id="TIGR00152">
    <property type="entry name" value="dephospho-CoA kinase"/>
    <property type="match status" value="1"/>
</dbReference>
<dbReference type="PANTHER" id="PTHR10695:SF46">
    <property type="entry name" value="BIFUNCTIONAL COENZYME A SYNTHASE-RELATED"/>
    <property type="match status" value="1"/>
</dbReference>
<dbReference type="PANTHER" id="PTHR10695">
    <property type="entry name" value="DEPHOSPHO-COA KINASE-RELATED"/>
    <property type="match status" value="1"/>
</dbReference>
<dbReference type="Pfam" id="PF01121">
    <property type="entry name" value="CoaE"/>
    <property type="match status" value="1"/>
</dbReference>
<dbReference type="SUPFAM" id="SSF52540">
    <property type="entry name" value="P-loop containing nucleoside triphosphate hydrolases"/>
    <property type="match status" value="1"/>
</dbReference>
<dbReference type="PROSITE" id="PS51219">
    <property type="entry name" value="DPCK"/>
    <property type="match status" value="1"/>
</dbReference>